<keyword id="KW-1185">Reference proteome</keyword>
<keyword id="KW-0687">Ribonucleoprotein</keyword>
<keyword id="KW-0689">Ribosomal protein</keyword>
<evidence type="ECO:0000255" key="1">
    <source>
        <dbReference type="HAMAP-Rule" id="MF_01371"/>
    </source>
</evidence>
<evidence type="ECO:0000305" key="2"/>
<reference key="1">
    <citation type="journal article" date="2007" name="J. Bacteriol.">
        <title>Genome of the opportunistic pathogen Streptococcus sanguinis.</title>
        <authorList>
            <person name="Xu P."/>
            <person name="Alves J.M."/>
            <person name="Kitten T."/>
            <person name="Brown A."/>
            <person name="Chen Z."/>
            <person name="Ozaki L.S."/>
            <person name="Manque P."/>
            <person name="Ge X."/>
            <person name="Serrano M.G."/>
            <person name="Puiu D."/>
            <person name="Hendricks S."/>
            <person name="Wang Y."/>
            <person name="Chaplin M.D."/>
            <person name="Akan D."/>
            <person name="Paik S."/>
            <person name="Peterson D.L."/>
            <person name="Macrina F.L."/>
            <person name="Buck G.A."/>
        </authorList>
    </citation>
    <scope>NUCLEOTIDE SEQUENCE [LARGE SCALE GENOMIC DNA]</scope>
    <source>
        <strain>SK36</strain>
    </source>
</reference>
<organism>
    <name type="scientific">Streptococcus sanguinis (strain SK36)</name>
    <dbReference type="NCBI Taxonomy" id="388919"/>
    <lineage>
        <taxon>Bacteria</taxon>
        <taxon>Bacillati</taxon>
        <taxon>Bacillota</taxon>
        <taxon>Bacilli</taxon>
        <taxon>Lactobacillales</taxon>
        <taxon>Streptococcaceae</taxon>
        <taxon>Streptococcus</taxon>
    </lineage>
</organism>
<proteinExistence type="inferred from homology"/>
<feature type="chain" id="PRO_1000056119" description="Large ribosomal subunit protein uL30">
    <location>
        <begin position="1"/>
        <end position="60"/>
    </location>
</feature>
<dbReference type="EMBL" id="CP000387">
    <property type="protein sequence ID" value="ABN43587.1"/>
    <property type="molecule type" value="Genomic_DNA"/>
</dbReference>
<dbReference type="RefSeq" id="WP_002894509.1">
    <property type="nucleotide sequence ID" value="NZ_CAXTYR010000005.1"/>
</dbReference>
<dbReference type="RefSeq" id="YP_001034137.1">
    <property type="nucleotide sequence ID" value="NC_009009.1"/>
</dbReference>
<dbReference type="SMR" id="A3CK82"/>
<dbReference type="STRING" id="388919.SSA_0125"/>
<dbReference type="GeneID" id="93964219"/>
<dbReference type="KEGG" id="ssa:SSA_0125"/>
<dbReference type="PATRIC" id="fig|388919.9.peg.119"/>
<dbReference type="eggNOG" id="COG1841">
    <property type="taxonomic scope" value="Bacteria"/>
</dbReference>
<dbReference type="HOGENOM" id="CLU_131047_2_1_9"/>
<dbReference type="OrthoDB" id="9812790at2"/>
<dbReference type="PRO" id="PR:A3CK82"/>
<dbReference type="Proteomes" id="UP000002148">
    <property type="component" value="Chromosome"/>
</dbReference>
<dbReference type="GO" id="GO:0022625">
    <property type="term" value="C:cytosolic large ribosomal subunit"/>
    <property type="evidence" value="ECO:0007669"/>
    <property type="project" value="TreeGrafter"/>
</dbReference>
<dbReference type="GO" id="GO:0003735">
    <property type="term" value="F:structural constituent of ribosome"/>
    <property type="evidence" value="ECO:0007669"/>
    <property type="project" value="InterPro"/>
</dbReference>
<dbReference type="GO" id="GO:0006412">
    <property type="term" value="P:translation"/>
    <property type="evidence" value="ECO:0007669"/>
    <property type="project" value="UniProtKB-UniRule"/>
</dbReference>
<dbReference type="CDD" id="cd01658">
    <property type="entry name" value="Ribosomal_L30"/>
    <property type="match status" value="1"/>
</dbReference>
<dbReference type="FunFam" id="3.30.1390.20:FF:000001">
    <property type="entry name" value="50S ribosomal protein L30"/>
    <property type="match status" value="1"/>
</dbReference>
<dbReference type="Gene3D" id="3.30.1390.20">
    <property type="entry name" value="Ribosomal protein L30, ferredoxin-like fold domain"/>
    <property type="match status" value="1"/>
</dbReference>
<dbReference type="HAMAP" id="MF_01371_B">
    <property type="entry name" value="Ribosomal_uL30_B"/>
    <property type="match status" value="1"/>
</dbReference>
<dbReference type="InterPro" id="IPR036919">
    <property type="entry name" value="Ribo_uL30_ferredoxin-like_sf"/>
</dbReference>
<dbReference type="InterPro" id="IPR005996">
    <property type="entry name" value="Ribosomal_uL30_bac-type"/>
</dbReference>
<dbReference type="InterPro" id="IPR018038">
    <property type="entry name" value="Ribosomal_uL30_CS"/>
</dbReference>
<dbReference type="InterPro" id="IPR016082">
    <property type="entry name" value="Ribosomal_uL30_ferredoxin-like"/>
</dbReference>
<dbReference type="NCBIfam" id="TIGR01308">
    <property type="entry name" value="rpmD_bact"/>
    <property type="match status" value="1"/>
</dbReference>
<dbReference type="PANTHER" id="PTHR15892:SF2">
    <property type="entry name" value="LARGE RIBOSOMAL SUBUNIT PROTEIN UL30M"/>
    <property type="match status" value="1"/>
</dbReference>
<dbReference type="PANTHER" id="PTHR15892">
    <property type="entry name" value="MITOCHONDRIAL RIBOSOMAL PROTEIN L30"/>
    <property type="match status" value="1"/>
</dbReference>
<dbReference type="Pfam" id="PF00327">
    <property type="entry name" value="Ribosomal_L30"/>
    <property type="match status" value="1"/>
</dbReference>
<dbReference type="PIRSF" id="PIRSF002211">
    <property type="entry name" value="Ribosomal_L30_bac-type"/>
    <property type="match status" value="1"/>
</dbReference>
<dbReference type="SUPFAM" id="SSF55129">
    <property type="entry name" value="Ribosomal protein L30p/L7e"/>
    <property type="match status" value="1"/>
</dbReference>
<dbReference type="PROSITE" id="PS00634">
    <property type="entry name" value="RIBOSOMAL_L30"/>
    <property type="match status" value="1"/>
</dbReference>
<accession>A3CK82</accession>
<comment type="subunit">
    <text evidence="1">Part of the 50S ribosomal subunit.</text>
</comment>
<comment type="similarity">
    <text evidence="1">Belongs to the universal ribosomal protein uL30 family.</text>
</comment>
<sequence length="60" mass="6425">MAQIKITLTKSPIGRIPSQRKTVVALGLGKLNSSVIKEDNPAVRGMITAVSHLVTVEEVK</sequence>
<gene>
    <name evidence="1" type="primary">rpmD</name>
    <name type="ordered locus">SSA_0125</name>
</gene>
<protein>
    <recommendedName>
        <fullName evidence="1">Large ribosomal subunit protein uL30</fullName>
    </recommendedName>
    <alternativeName>
        <fullName evidence="2">50S ribosomal protein L30</fullName>
    </alternativeName>
</protein>
<name>RL30_STRSV</name>